<comment type="function">
    <text>Couples the p55 TNF-receptor (TNF-R55 / TNFR1) to neutral sphingomyelinase (N-SMASE). Specifically binds to the N-smase activation domain of TNF-R55. May regulate ceramide production by N-SMASE.</text>
</comment>
<accession>O35242</accession>
<accession>A2AKK1</accession>
<protein>
    <recommendedName>
        <fullName>Protein FAN</fullName>
    </recommendedName>
    <alternativeName>
        <fullName>Factor associated with neutral sphingomyelinase activation</fullName>
        <shortName>Factor associated with N-SMase activation</shortName>
    </alternativeName>
</protein>
<sequence length="920" mass="104546">MAFTRKRQREQQLQLYSKERFSLLLLNLEEYYFEQHTAFHVQHQGSQEERKIRGSLKICSKSVIFEPDAISQPILKIPLRDCLKIGKHGENGANKHFAKAKSWGISLIFSQIYFIKEHNIVAPYKIERGKMEYVFELEVSGKVEDVVETLLQLHRASCLDKLGDQMAMITAILQSRLARTSFDKNRFQSVSEKLHMECKAEMVTPLVTNPGHVCITDTSLYFQPLNGYPKPVVQITLQDVRRIYKRRHGLMPLGLEVFCTDDDLCSDIYLKFYEPQDRDDLYFYIATYLEHHAAEHTAESYMLQWQRGHLSNYQYLLHLNNLADRSCNDLSQYPVFPWIISDYSSPELDLSNPATFRDLSKPVGALNAERLERLLTRYQEMPEPRFMYGSHYSSPGYVLFYLVRIAPEYMLCLQNGRFDNADRMFNSIAETWKNCLDGATDFKELIPEFYDEDVSFLVNSLKLDLGKRQGGQMVDDVDLPAWASSPQDFLQKNKDALESGYVSEHLHEWIDLIFGYKQKGSEAIGAHNVFHPLTYEGGVDLNSIEDPDEKVAMLTQILEFGQTPKQLFVTPHPRRITPKFKSLSQASSYNASLTDSPVSPGEESFEDLTEESRTLAWSNIAKLQLHEQYKIHKEAVTGIAVSCNGSSVFTTSQDSTLKMFSKESKMLQRSISFSNMALSSCLLLPGDTTVISSSWDNNVYFYSIAFGRRQDTLMGHDDAVSKICWHNDRLYSGSWDSTVKVWSGVPAEMPGTKRHQFDLLAELEHDVSVNTINLNAVSTLLVSGTKEGMVNIWDLTTATLLHQTSCHSGTVCDAAFSPDSRHILSTGVDGCLNVIDVQTGMLISSMASEEPQRCFVWDGNSVLSGSRSGELLVWDLLGAKVSERIQGHTGAVTCMWMNEQCSSIITGGEDRQIMFWKLQY</sequence>
<organism>
    <name type="scientific">Mus musculus</name>
    <name type="common">Mouse</name>
    <dbReference type="NCBI Taxonomy" id="10090"/>
    <lineage>
        <taxon>Eukaryota</taxon>
        <taxon>Metazoa</taxon>
        <taxon>Chordata</taxon>
        <taxon>Craniata</taxon>
        <taxon>Vertebrata</taxon>
        <taxon>Euteleostomi</taxon>
        <taxon>Mammalia</taxon>
        <taxon>Eutheria</taxon>
        <taxon>Euarchontoglires</taxon>
        <taxon>Glires</taxon>
        <taxon>Rodentia</taxon>
        <taxon>Myomorpha</taxon>
        <taxon>Muroidea</taxon>
        <taxon>Muridae</taxon>
        <taxon>Murinae</taxon>
        <taxon>Mus</taxon>
        <taxon>Mus</taxon>
    </lineage>
</organism>
<feature type="chain" id="PRO_0000050976" description="Protein FAN">
    <location>
        <begin position="1"/>
        <end position="920"/>
    </location>
</feature>
<feature type="domain" description="GRAM">
    <location>
        <begin position="176"/>
        <end position="247"/>
    </location>
</feature>
<feature type="domain" description="BEACH-type PH" evidence="2">
    <location>
        <begin position="189"/>
        <end position="286"/>
    </location>
</feature>
<feature type="domain" description="BEACH" evidence="1">
    <location>
        <begin position="290"/>
        <end position="575"/>
    </location>
</feature>
<feature type="repeat" description="WD 1">
    <location>
        <begin position="631"/>
        <end position="661"/>
    </location>
</feature>
<feature type="repeat" description="WD 2">
    <location>
        <begin position="673"/>
        <end position="703"/>
    </location>
</feature>
<feature type="repeat" description="WD 3">
    <location>
        <begin position="715"/>
        <end position="743"/>
    </location>
</feature>
<feature type="repeat" description="WD 4">
    <location>
        <begin position="764"/>
        <end position="794"/>
    </location>
</feature>
<feature type="repeat" description="WD 5">
    <location>
        <begin position="806"/>
        <end position="836"/>
    </location>
</feature>
<feature type="repeat" description="WD 6">
    <location>
        <begin position="887"/>
        <end position="917"/>
    </location>
</feature>
<feature type="sequence conflict" description="In Ref. 1; AAB65394." evidence="3" ref="1">
    <original>RF</original>
    <variation>KS</variation>
    <location>
        <begin position="385"/>
        <end position="386"/>
    </location>
</feature>
<feature type="sequence conflict" description="In Ref. 1; AAB65394." evidence="3" ref="1">
    <original>S</original>
    <variation>N</variation>
    <location>
        <position position="390"/>
    </location>
</feature>
<feature type="sequence conflict" description="In Ref. 1; AAB65394." evidence="3" ref="1">
    <original>E</original>
    <variation>D</variation>
    <location>
        <position position="849"/>
    </location>
</feature>
<gene>
    <name type="primary">Nsmaf</name>
    <name type="synonym">Fan</name>
</gene>
<reference key="1">
    <citation type="journal article" date="1999" name="EMBO J.">
        <title>Impaired neutral sphingomyelinase activation and cutaneous barrier repair in FAN-deficient mice.</title>
        <authorList>
            <person name="Kreder D."/>
            <person name="Krut O."/>
            <person name="Adam-Klages S."/>
            <person name="Wiegmann K."/>
            <person name="Scherer G."/>
            <person name="Plitz T."/>
            <person name="Jensen J.M."/>
            <person name="Proksch E."/>
            <person name="Steinmann J."/>
            <person name="Pfeffer K."/>
            <person name="Kroenke M."/>
        </authorList>
    </citation>
    <scope>NUCLEOTIDE SEQUENCE [MRNA]</scope>
    <source>
        <strain>C57BL/6J</strain>
        <tissue>Thymus</tissue>
    </source>
</reference>
<reference key="2">
    <citation type="journal article" date="2009" name="PLoS Biol.">
        <title>Lineage-specific biology revealed by a finished genome assembly of the mouse.</title>
        <authorList>
            <person name="Church D.M."/>
            <person name="Goodstadt L."/>
            <person name="Hillier L.W."/>
            <person name="Zody M.C."/>
            <person name="Goldstein S."/>
            <person name="She X."/>
            <person name="Bult C.J."/>
            <person name="Agarwala R."/>
            <person name="Cherry J.L."/>
            <person name="DiCuccio M."/>
            <person name="Hlavina W."/>
            <person name="Kapustin Y."/>
            <person name="Meric P."/>
            <person name="Maglott D."/>
            <person name="Birtle Z."/>
            <person name="Marques A.C."/>
            <person name="Graves T."/>
            <person name="Zhou S."/>
            <person name="Teague B."/>
            <person name="Potamousis K."/>
            <person name="Churas C."/>
            <person name="Place M."/>
            <person name="Herschleb J."/>
            <person name="Runnheim R."/>
            <person name="Forrest D."/>
            <person name="Amos-Landgraf J."/>
            <person name="Schwartz D.C."/>
            <person name="Cheng Z."/>
            <person name="Lindblad-Toh K."/>
            <person name="Eichler E.E."/>
            <person name="Ponting C.P."/>
        </authorList>
    </citation>
    <scope>NUCLEOTIDE SEQUENCE [LARGE SCALE GENOMIC DNA]</scope>
    <source>
        <strain>C57BL/6J</strain>
    </source>
</reference>
<reference key="3">
    <citation type="submission" date="2005-09" db="EMBL/GenBank/DDBJ databases">
        <authorList>
            <person name="Mural R.J."/>
            <person name="Adams M.D."/>
            <person name="Myers E.W."/>
            <person name="Smith H.O."/>
            <person name="Venter J.C."/>
        </authorList>
    </citation>
    <scope>NUCLEOTIDE SEQUENCE [LARGE SCALE GENOMIC DNA]</scope>
</reference>
<reference key="4">
    <citation type="journal article" date="2004" name="Genome Res.">
        <title>The status, quality, and expansion of the NIH full-length cDNA project: the Mammalian Gene Collection (MGC).</title>
        <authorList>
            <consortium name="The MGC Project Team"/>
        </authorList>
    </citation>
    <scope>NUCLEOTIDE SEQUENCE [LARGE SCALE MRNA]</scope>
    <source>
        <tissue>Brain</tissue>
    </source>
</reference>
<reference key="5">
    <citation type="journal article" date="2010" name="Cell">
        <title>A tissue-specific atlas of mouse protein phosphorylation and expression.</title>
        <authorList>
            <person name="Huttlin E.L."/>
            <person name="Jedrychowski M.P."/>
            <person name="Elias J.E."/>
            <person name="Goswami T."/>
            <person name="Rad R."/>
            <person name="Beausoleil S.A."/>
            <person name="Villen J."/>
            <person name="Haas W."/>
            <person name="Sowa M.E."/>
            <person name="Gygi S.P."/>
        </authorList>
    </citation>
    <scope>IDENTIFICATION BY MASS SPECTROMETRY [LARGE SCALE ANALYSIS]</scope>
    <source>
        <tissue>Spleen</tissue>
    </source>
</reference>
<name>FAN_MOUSE</name>
<evidence type="ECO:0000255" key="1">
    <source>
        <dbReference type="PROSITE-ProRule" id="PRU00026"/>
    </source>
</evidence>
<evidence type="ECO:0000255" key="2">
    <source>
        <dbReference type="PROSITE-ProRule" id="PRU01119"/>
    </source>
</evidence>
<evidence type="ECO:0000305" key="3"/>
<proteinExistence type="evidence at protein level"/>
<dbReference type="EMBL" id="AF013632">
    <property type="protein sequence ID" value="AAB65394.1"/>
    <property type="molecule type" value="mRNA"/>
</dbReference>
<dbReference type="EMBL" id="AL772306">
    <property type="status" value="NOT_ANNOTATED_CDS"/>
    <property type="molecule type" value="Genomic_DNA"/>
</dbReference>
<dbReference type="EMBL" id="BX510318">
    <property type="status" value="NOT_ANNOTATED_CDS"/>
    <property type="molecule type" value="Genomic_DNA"/>
</dbReference>
<dbReference type="EMBL" id="CH466538">
    <property type="protein sequence ID" value="EDL05686.1"/>
    <property type="molecule type" value="Genomic_DNA"/>
</dbReference>
<dbReference type="EMBL" id="BC145961">
    <property type="protein sequence ID" value="AAI45962.1"/>
    <property type="molecule type" value="mRNA"/>
</dbReference>
<dbReference type="EMBL" id="BC145963">
    <property type="protein sequence ID" value="AAI45964.1"/>
    <property type="molecule type" value="mRNA"/>
</dbReference>
<dbReference type="CCDS" id="CCDS17952.1"/>
<dbReference type="RefSeq" id="NP_035075.2">
    <property type="nucleotide sequence ID" value="NM_010945.3"/>
</dbReference>
<dbReference type="SMR" id="O35242"/>
<dbReference type="BioGRID" id="201861">
    <property type="interactions" value="1"/>
</dbReference>
<dbReference type="FunCoup" id="O35242">
    <property type="interactions" value="3246"/>
</dbReference>
<dbReference type="STRING" id="10090.ENSMUSP00000029910"/>
<dbReference type="iPTMnet" id="O35242"/>
<dbReference type="PhosphoSitePlus" id="O35242"/>
<dbReference type="PaxDb" id="10090-ENSMUSP00000029910"/>
<dbReference type="PeptideAtlas" id="O35242"/>
<dbReference type="ProteomicsDB" id="267570"/>
<dbReference type="Pumba" id="O35242"/>
<dbReference type="Antibodypedia" id="11802">
    <property type="antibodies" value="120 antibodies from 25 providers"/>
</dbReference>
<dbReference type="DNASU" id="18201"/>
<dbReference type="Ensembl" id="ENSMUST00000029910.12">
    <property type="protein sequence ID" value="ENSMUSP00000029910.6"/>
    <property type="gene ID" value="ENSMUSG00000028245.16"/>
</dbReference>
<dbReference type="GeneID" id="18201"/>
<dbReference type="KEGG" id="mmu:18201"/>
<dbReference type="UCSC" id="uc008rxp.2">
    <property type="organism name" value="mouse"/>
</dbReference>
<dbReference type="AGR" id="MGI:1341864"/>
<dbReference type="CTD" id="8439"/>
<dbReference type="MGI" id="MGI:1341864">
    <property type="gene designation" value="Nsmaf"/>
</dbReference>
<dbReference type="VEuPathDB" id="HostDB:ENSMUSG00000028245"/>
<dbReference type="eggNOG" id="KOG1786">
    <property type="taxonomic scope" value="Eukaryota"/>
</dbReference>
<dbReference type="GeneTree" id="ENSGT00940000155059"/>
<dbReference type="HOGENOM" id="CLU_000218_5_2_1"/>
<dbReference type="InParanoid" id="O35242"/>
<dbReference type="OMA" id="QVYKRRY"/>
<dbReference type="OrthoDB" id="26681at2759"/>
<dbReference type="PhylomeDB" id="O35242"/>
<dbReference type="TreeFam" id="TF324912"/>
<dbReference type="Reactome" id="R-MMU-5626978">
    <property type="pathway name" value="TNFR1-mediated ceramide production"/>
</dbReference>
<dbReference type="BioGRID-ORCS" id="18201">
    <property type="hits" value="5 hits in 81 CRISPR screens"/>
</dbReference>
<dbReference type="ChiTaRS" id="Nsmaf">
    <property type="organism name" value="mouse"/>
</dbReference>
<dbReference type="PRO" id="PR:O35242"/>
<dbReference type="Proteomes" id="UP000000589">
    <property type="component" value="Chromosome 4"/>
</dbReference>
<dbReference type="RNAct" id="O35242">
    <property type="molecule type" value="protein"/>
</dbReference>
<dbReference type="Bgee" id="ENSMUSG00000028245">
    <property type="expression patterns" value="Expressed in undifferentiated genital tubercle and 263 other cell types or tissues"/>
</dbReference>
<dbReference type="ExpressionAtlas" id="O35242">
    <property type="expression patterns" value="baseline and differential"/>
</dbReference>
<dbReference type="GO" id="GO:0005886">
    <property type="term" value="C:plasma membrane"/>
    <property type="evidence" value="ECO:0000266"/>
    <property type="project" value="MGI"/>
</dbReference>
<dbReference type="GO" id="GO:0005123">
    <property type="term" value="F:death receptor binding"/>
    <property type="evidence" value="ECO:0000304"/>
    <property type="project" value="MGI"/>
</dbReference>
<dbReference type="GO" id="GO:0035591">
    <property type="term" value="F:signaling adaptor activity"/>
    <property type="evidence" value="ECO:0000266"/>
    <property type="project" value="MGI"/>
</dbReference>
<dbReference type="GO" id="GO:0034250">
    <property type="term" value="P:positive regulation of amide metabolic process"/>
    <property type="evidence" value="ECO:0000315"/>
    <property type="project" value="MGI"/>
</dbReference>
<dbReference type="GO" id="GO:0045834">
    <property type="term" value="P:positive regulation of lipid metabolic process"/>
    <property type="evidence" value="ECO:0000315"/>
    <property type="project" value="MGI"/>
</dbReference>
<dbReference type="GO" id="GO:1905038">
    <property type="term" value="P:regulation of membrane lipid metabolic process"/>
    <property type="evidence" value="ECO:0000315"/>
    <property type="project" value="MGI"/>
</dbReference>
<dbReference type="GO" id="GO:0033209">
    <property type="term" value="P:tumor necrosis factor-mediated signaling pathway"/>
    <property type="evidence" value="ECO:0000315"/>
    <property type="project" value="MGI"/>
</dbReference>
<dbReference type="CDD" id="cd06071">
    <property type="entry name" value="Beach"/>
    <property type="match status" value="1"/>
</dbReference>
<dbReference type="CDD" id="cd01201">
    <property type="entry name" value="PH_BEACH"/>
    <property type="match status" value="1"/>
</dbReference>
<dbReference type="CDD" id="cd00200">
    <property type="entry name" value="WD40"/>
    <property type="match status" value="1"/>
</dbReference>
<dbReference type="FunFam" id="1.10.1540.10:FF:000001">
    <property type="entry name" value="neurobeachin isoform X1"/>
    <property type="match status" value="1"/>
</dbReference>
<dbReference type="FunFam" id="2.30.29.30:FF:000367">
    <property type="entry name" value="Neutral sphingomyelinase activation associated factor"/>
    <property type="match status" value="1"/>
</dbReference>
<dbReference type="FunFam" id="2.130.10.10:FF:000336">
    <property type="entry name" value="Neutral sphingomyelinase activation-associated factor"/>
    <property type="match status" value="1"/>
</dbReference>
<dbReference type="FunFam" id="2.130.10.10:FF:002193">
    <property type="entry name" value="Neutral sphingomyelinase activation-associated factor"/>
    <property type="match status" value="1"/>
</dbReference>
<dbReference type="Gene3D" id="1.10.1540.10">
    <property type="entry name" value="BEACH domain"/>
    <property type="match status" value="1"/>
</dbReference>
<dbReference type="Gene3D" id="2.30.29.30">
    <property type="entry name" value="Pleckstrin-homology domain (PH domain)/Phosphotyrosine-binding domain (PTB)"/>
    <property type="match status" value="1"/>
</dbReference>
<dbReference type="Gene3D" id="2.130.10.10">
    <property type="entry name" value="YVTN repeat-like/Quinoprotein amine dehydrogenase"/>
    <property type="match status" value="3"/>
</dbReference>
<dbReference type="InterPro" id="IPR000409">
    <property type="entry name" value="BEACH_dom"/>
</dbReference>
<dbReference type="InterPro" id="IPR036372">
    <property type="entry name" value="BEACH_dom_sf"/>
</dbReference>
<dbReference type="InterPro" id="IPR050865">
    <property type="entry name" value="BEACH_Domain"/>
</dbReference>
<dbReference type="InterPro" id="IPR004182">
    <property type="entry name" value="GRAM"/>
</dbReference>
<dbReference type="InterPro" id="IPR023362">
    <property type="entry name" value="PH-BEACH_dom"/>
</dbReference>
<dbReference type="InterPro" id="IPR011993">
    <property type="entry name" value="PH-like_dom_sf"/>
</dbReference>
<dbReference type="InterPro" id="IPR015943">
    <property type="entry name" value="WD40/YVTN_repeat-like_dom_sf"/>
</dbReference>
<dbReference type="InterPro" id="IPR036322">
    <property type="entry name" value="WD40_repeat_dom_sf"/>
</dbReference>
<dbReference type="InterPro" id="IPR001680">
    <property type="entry name" value="WD40_rpt"/>
</dbReference>
<dbReference type="PANTHER" id="PTHR13743">
    <property type="entry name" value="BEIGE/BEACH-RELATED"/>
    <property type="match status" value="1"/>
</dbReference>
<dbReference type="PANTHER" id="PTHR13743:SF123">
    <property type="entry name" value="PROTEIN FAN"/>
    <property type="match status" value="1"/>
</dbReference>
<dbReference type="Pfam" id="PF02138">
    <property type="entry name" value="Beach"/>
    <property type="match status" value="1"/>
</dbReference>
<dbReference type="Pfam" id="PF02893">
    <property type="entry name" value="GRAM"/>
    <property type="match status" value="1"/>
</dbReference>
<dbReference type="Pfam" id="PF25400">
    <property type="entry name" value="PH_FAN"/>
    <property type="match status" value="1"/>
</dbReference>
<dbReference type="Pfam" id="PF00400">
    <property type="entry name" value="WD40"/>
    <property type="match status" value="5"/>
</dbReference>
<dbReference type="SMART" id="SM01026">
    <property type="entry name" value="Beach"/>
    <property type="match status" value="1"/>
</dbReference>
<dbReference type="SMART" id="SM00568">
    <property type="entry name" value="GRAM"/>
    <property type="match status" value="1"/>
</dbReference>
<dbReference type="SMART" id="SM00320">
    <property type="entry name" value="WD40"/>
    <property type="match status" value="7"/>
</dbReference>
<dbReference type="SUPFAM" id="SSF81837">
    <property type="entry name" value="BEACH domain"/>
    <property type="match status" value="1"/>
</dbReference>
<dbReference type="SUPFAM" id="SSF50729">
    <property type="entry name" value="PH domain-like"/>
    <property type="match status" value="1"/>
</dbReference>
<dbReference type="SUPFAM" id="SSF50978">
    <property type="entry name" value="WD40 repeat-like"/>
    <property type="match status" value="1"/>
</dbReference>
<dbReference type="PROSITE" id="PS50197">
    <property type="entry name" value="BEACH"/>
    <property type="match status" value="1"/>
</dbReference>
<dbReference type="PROSITE" id="PS51783">
    <property type="entry name" value="PH_BEACH"/>
    <property type="match status" value="1"/>
</dbReference>
<dbReference type="PROSITE" id="PS50082">
    <property type="entry name" value="WD_REPEATS_2"/>
    <property type="match status" value="4"/>
</dbReference>
<dbReference type="PROSITE" id="PS50294">
    <property type="entry name" value="WD_REPEATS_REGION"/>
    <property type="match status" value="1"/>
</dbReference>
<keyword id="KW-1185">Reference proteome</keyword>
<keyword id="KW-0677">Repeat</keyword>
<keyword id="KW-0853">WD repeat</keyword>